<proteinExistence type="evidence at transcript level"/>
<reference key="1">
    <citation type="journal article" date="2002" name="J. Bacteriol.">
        <title>Whole-genome comparison of Mycobacterium tuberculosis clinical and laboratory strains.</title>
        <authorList>
            <person name="Fleischmann R.D."/>
            <person name="Alland D."/>
            <person name="Eisen J.A."/>
            <person name="Carpenter L."/>
            <person name="White O."/>
            <person name="Peterson J.D."/>
            <person name="DeBoy R.T."/>
            <person name="Dodson R.J."/>
            <person name="Gwinn M.L."/>
            <person name="Haft D.H."/>
            <person name="Hickey E.K."/>
            <person name="Kolonay J.F."/>
            <person name="Nelson W.C."/>
            <person name="Umayam L.A."/>
            <person name="Ermolaeva M.D."/>
            <person name="Salzberg S.L."/>
            <person name="Delcher A."/>
            <person name="Utterback T.R."/>
            <person name="Weidman J.F."/>
            <person name="Khouri H.M."/>
            <person name="Gill J."/>
            <person name="Mikula A."/>
            <person name="Bishai W."/>
            <person name="Jacobs W.R. Jr."/>
            <person name="Venter J.C."/>
            <person name="Fraser C.M."/>
        </authorList>
    </citation>
    <scope>NUCLEOTIDE SEQUENCE [LARGE SCALE GENOMIC DNA]</scope>
    <source>
        <strain>CDC 1551 / Oshkosh</strain>
    </source>
</reference>
<reference key="2">
    <citation type="journal article" date="2009" name="J. Bacteriol.">
        <title>Functional genomics reveals extended roles of the Mycobacterium tuberculosis stress response factor sigmaH.</title>
        <authorList>
            <person name="Mehra S."/>
            <person name="Kaushal D."/>
        </authorList>
    </citation>
    <scope>INDUCTION</scope>
    <source>
        <strain>CDC 1551 / Oshkosh</strain>
    </source>
</reference>
<organism>
    <name type="scientific">Mycobacterium tuberculosis (strain CDC 1551 / Oshkosh)</name>
    <dbReference type="NCBI Taxonomy" id="83331"/>
    <lineage>
        <taxon>Bacteria</taxon>
        <taxon>Bacillati</taxon>
        <taxon>Actinomycetota</taxon>
        <taxon>Actinomycetes</taxon>
        <taxon>Mycobacteriales</taxon>
        <taxon>Mycobacteriaceae</taxon>
        <taxon>Mycobacterium</taxon>
        <taxon>Mycobacterium tuberculosis complex</taxon>
    </lineage>
</organism>
<comment type="function">
    <text evidence="1">Cleaves peptides in various proteins in a process that requires ATP hydrolysis. Has a chymotrypsin-like activity. Plays a major role in the degradation of misfolded proteins.</text>
</comment>
<comment type="catalytic activity">
    <reaction evidence="1">
        <text>Hydrolysis of proteins to small peptides in the presence of ATP and magnesium. alpha-casein is the usual test substrate. In the absence of ATP, only oligopeptides shorter than five residues are hydrolyzed (such as succinyl-Leu-Tyr-|-NHMec, and Leu-Tyr-Leu-|-Tyr-Trp, in which cleavage of the -Tyr-|-Leu- and -Tyr-|-Trp bonds also occurs).</text>
        <dbReference type="EC" id="3.4.21.92"/>
    </reaction>
</comment>
<comment type="subunit">
    <text evidence="1">Fourteen ClpP subunits assemble into 2 heptameric rings which stack back to back to give a disk-like structure with a central cavity, resembling the structure of eukaryotic proteasomes.</text>
</comment>
<comment type="subcellular location">
    <subcellularLocation>
        <location evidence="1">Cytoplasm</location>
    </subcellularLocation>
</comment>
<comment type="induction">
    <text evidence="2">Expression requires transcriptional regulator ClgR.</text>
</comment>
<comment type="similarity">
    <text evidence="1">Belongs to the peptidase S14 family.</text>
</comment>
<feature type="chain" id="PRO_0000426976" description="ATP-dependent Clp protease proteolytic subunit 1">
    <location>
        <begin position="1"/>
        <end position="200"/>
    </location>
</feature>
<feature type="active site" description="Nucleophile" evidence="1">
    <location>
        <position position="98"/>
    </location>
</feature>
<feature type="active site" evidence="1">
    <location>
        <position position="123"/>
    </location>
</feature>
<evidence type="ECO:0000255" key="1">
    <source>
        <dbReference type="HAMAP-Rule" id="MF_00444"/>
    </source>
</evidence>
<evidence type="ECO:0000269" key="2">
    <source>
    </source>
</evidence>
<gene>
    <name evidence="1" type="primary">clpP1</name>
    <name type="synonym">clpP</name>
    <name type="ordered locus">MT2536</name>
</gene>
<accession>P9WPC4</accession>
<accession>L0TBA3</accession>
<accession>O53188</accession>
<accession>P0A526</accession>
<sequence length="200" mass="21708">MSQVTDMRSNSQGLSLTDSVYERLLSERIIFLGSEVNDEIANRLCAQILLLAAEDASKDISLYINSPGGSISAGMAIYDTMVLAPCDIATYAMGMAASMGEFLLAAGTKGKRYALPHARILMHQPLGGVTGSAADIAIQAEQFAVIKKEMFRLNAEFTGQPIERIEADSDRDRWFTAAEALEYGFVDHIITRAHVNGEAQ</sequence>
<keyword id="KW-0963">Cytoplasm</keyword>
<keyword id="KW-0378">Hydrolase</keyword>
<keyword id="KW-0645">Protease</keyword>
<keyword id="KW-1185">Reference proteome</keyword>
<keyword id="KW-0720">Serine protease</keyword>
<protein>
    <recommendedName>
        <fullName evidence="1">ATP-dependent Clp protease proteolytic subunit 1</fullName>
        <ecNumber evidence="1">3.4.21.92</ecNumber>
    </recommendedName>
    <alternativeName>
        <fullName evidence="1">Endopeptidase Clp 1</fullName>
    </alternativeName>
</protein>
<dbReference type="EC" id="3.4.21.92" evidence="1"/>
<dbReference type="EMBL" id="AE000516">
    <property type="protein sequence ID" value="AAK46836.1"/>
    <property type="molecule type" value="Genomic_DNA"/>
</dbReference>
<dbReference type="PIR" id="D70865">
    <property type="entry name" value="D70865"/>
</dbReference>
<dbReference type="RefSeq" id="WP_003412650.1">
    <property type="nucleotide sequence ID" value="NZ_KK341227.1"/>
</dbReference>
<dbReference type="SMR" id="P9WPC4"/>
<dbReference type="MEROPS" id="S14.008"/>
<dbReference type="GeneID" id="45426451"/>
<dbReference type="KEGG" id="mtc:MT2536"/>
<dbReference type="PATRIC" id="fig|83331.31.peg.2737"/>
<dbReference type="HOGENOM" id="CLU_058707_3_2_11"/>
<dbReference type="Proteomes" id="UP000001020">
    <property type="component" value="Chromosome"/>
</dbReference>
<dbReference type="GO" id="GO:0005737">
    <property type="term" value="C:cytoplasm"/>
    <property type="evidence" value="ECO:0007669"/>
    <property type="project" value="UniProtKB-SubCell"/>
</dbReference>
<dbReference type="GO" id="GO:0009368">
    <property type="term" value="C:endopeptidase Clp complex"/>
    <property type="evidence" value="ECO:0007669"/>
    <property type="project" value="TreeGrafter"/>
</dbReference>
<dbReference type="GO" id="GO:0004176">
    <property type="term" value="F:ATP-dependent peptidase activity"/>
    <property type="evidence" value="ECO:0007669"/>
    <property type="project" value="InterPro"/>
</dbReference>
<dbReference type="GO" id="GO:0051117">
    <property type="term" value="F:ATPase binding"/>
    <property type="evidence" value="ECO:0007669"/>
    <property type="project" value="TreeGrafter"/>
</dbReference>
<dbReference type="GO" id="GO:0004252">
    <property type="term" value="F:serine-type endopeptidase activity"/>
    <property type="evidence" value="ECO:0007669"/>
    <property type="project" value="UniProtKB-UniRule"/>
</dbReference>
<dbReference type="GO" id="GO:0006515">
    <property type="term" value="P:protein quality control for misfolded or incompletely synthesized proteins"/>
    <property type="evidence" value="ECO:0007669"/>
    <property type="project" value="TreeGrafter"/>
</dbReference>
<dbReference type="CDD" id="cd07017">
    <property type="entry name" value="S14_ClpP_2"/>
    <property type="match status" value="1"/>
</dbReference>
<dbReference type="FunFam" id="3.90.226.10:FF:000002">
    <property type="entry name" value="ATP-dependent Clp protease proteolytic subunit"/>
    <property type="match status" value="1"/>
</dbReference>
<dbReference type="Gene3D" id="3.90.226.10">
    <property type="entry name" value="2-enoyl-CoA Hydratase, Chain A, domain 1"/>
    <property type="match status" value="1"/>
</dbReference>
<dbReference type="HAMAP" id="MF_00444">
    <property type="entry name" value="ClpP"/>
    <property type="match status" value="1"/>
</dbReference>
<dbReference type="InterPro" id="IPR001907">
    <property type="entry name" value="ClpP"/>
</dbReference>
<dbReference type="InterPro" id="IPR029045">
    <property type="entry name" value="ClpP/crotonase-like_dom_sf"/>
</dbReference>
<dbReference type="InterPro" id="IPR023562">
    <property type="entry name" value="ClpP/TepA"/>
</dbReference>
<dbReference type="InterPro" id="IPR033135">
    <property type="entry name" value="ClpP_His_AS"/>
</dbReference>
<dbReference type="NCBIfam" id="NF001368">
    <property type="entry name" value="PRK00277.1"/>
    <property type="match status" value="1"/>
</dbReference>
<dbReference type="NCBIfam" id="NF009205">
    <property type="entry name" value="PRK12553.1"/>
    <property type="match status" value="1"/>
</dbReference>
<dbReference type="PANTHER" id="PTHR10381">
    <property type="entry name" value="ATP-DEPENDENT CLP PROTEASE PROTEOLYTIC SUBUNIT"/>
    <property type="match status" value="1"/>
</dbReference>
<dbReference type="PANTHER" id="PTHR10381:SF70">
    <property type="entry name" value="ATP-DEPENDENT CLP PROTEASE PROTEOLYTIC SUBUNIT"/>
    <property type="match status" value="1"/>
</dbReference>
<dbReference type="Pfam" id="PF00574">
    <property type="entry name" value="CLP_protease"/>
    <property type="match status" value="1"/>
</dbReference>
<dbReference type="PRINTS" id="PR00127">
    <property type="entry name" value="CLPPROTEASEP"/>
</dbReference>
<dbReference type="SUPFAM" id="SSF52096">
    <property type="entry name" value="ClpP/crotonase"/>
    <property type="match status" value="1"/>
</dbReference>
<dbReference type="PROSITE" id="PS00382">
    <property type="entry name" value="CLP_PROTEASE_HIS"/>
    <property type="match status" value="1"/>
</dbReference>
<name>CLPP1_MYCTO</name>